<protein>
    <recommendedName>
        <fullName evidence="1">UPF0060 membrane protein Rv2639c</fullName>
    </recommendedName>
</protein>
<dbReference type="EMBL" id="AL123456">
    <property type="protein sequence ID" value="CCP45437.1"/>
    <property type="molecule type" value="Genomic_DNA"/>
</dbReference>
<dbReference type="PIR" id="C70964">
    <property type="entry name" value="C70964"/>
</dbReference>
<dbReference type="RefSeq" id="NP_217155.1">
    <property type="nucleotide sequence ID" value="NC_000962.3"/>
</dbReference>
<dbReference type="RefSeq" id="WP_003413663.1">
    <property type="nucleotide sequence ID" value="NZ_NVQJ01000077.1"/>
</dbReference>
<dbReference type="PaxDb" id="83332-Rv2639c"/>
<dbReference type="DNASU" id="887428"/>
<dbReference type="GeneID" id="887428"/>
<dbReference type="KEGG" id="mtu:Rv2639c"/>
<dbReference type="KEGG" id="mtv:RVBD_2639c"/>
<dbReference type="TubercuList" id="Rv2639c"/>
<dbReference type="eggNOG" id="COG1742">
    <property type="taxonomic scope" value="Bacteria"/>
</dbReference>
<dbReference type="InParanoid" id="P9WFN9"/>
<dbReference type="OrthoDB" id="123240at2"/>
<dbReference type="PhylomeDB" id="P9WFN9"/>
<dbReference type="Proteomes" id="UP000001584">
    <property type="component" value="Chromosome"/>
</dbReference>
<dbReference type="GO" id="GO:0005576">
    <property type="term" value="C:extracellular region"/>
    <property type="evidence" value="ECO:0007005"/>
    <property type="project" value="MTBBASE"/>
</dbReference>
<dbReference type="GO" id="GO:0005886">
    <property type="term" value="C:plasma membrane"/>
    <property type="evidence" value="ECO:0000318"/>
    <property type="project" value="GO_Central"/>
</dbReference>
<dbReference type="HAMAP" id="MF_00010">
    <property type="entry name" value="UPF0060"/>
    <property type="match status" value="1"/>
</dbReference>
<dbReference type="InterPro" id="IPR003844">
    <property type="entry name" value="UPF0060"/>
</dbReference>
<dbReference type="NCBIfam" id="NF002586">
    <property type="entry name" value="PRK02237.1"/>
    <property type="match status" value="1"/>
</dbReference>
<dbReference type="PANTHER" id="PTHR36116">
    <property type="entry name" value="UPF0060 MEMBRANE PROTEIN YNFA"/>
    <property type="match status" value="1"/>
</dbReference>
<dbReference type="PANTHER" id="PTHR36116:SF1">
    <property type="entry name" value="UPF0060 MEMBRANE PROTEIN YNFA"/>
    <property type="match status" value="1"/>
</dbReference>
<dbReference type="Pfam" id="PF02694">
    <property type="entry name" value="UPF0060"/>
    <property type="match status" value="1"/>
</dbReference>
<dbReference type="SUPFAM" id="SSF103481">
    <property type="entry name" value="Multidrug resistance efflux transporter EmrE"/>
    <property type="match status" value="1"/>
</dbReference>
<proteinExistence type="inferred from homology"/>
<accession>P9WFN9</accession>
<accession>L0TD48</accession>
<accession>P67146</accession>
<accession>P71938</accession>
<evidence type="ECO:0000255" key="1">
    <source>
        <dbReference type="HAMAP-Rule" id="MF_00010"/>
    </source>
</evidence>
<sequence length="110" mass="11720">MVVRSILLFVLAAVAEIGGAWLVWQGVREQRGWLWAGLGVIALGVYGFFATLQPDAHFGRVLAAYGGVFVAGSLAWGMALDGFRPDRWDVIGALGCMAGVAVIMYAPRGH</sequence>
<comment type="subcellular location">
    <subcellularLocation>
        <location evidence="1">Cell membrane</location>
        <topology evidence="1">Multi-pass membrane protein</topology>
    </subcellularLocation>
</comment>
<comment type="similarity">
    <text evidence="1">Belongs to the UPF0060 family.</text>
</comment>
<feature type="chain" id="PRO_0000162333" description="UPF0060 membrane protein Rv2639c">
    <location>
        <begin position="1"/>
        <end position="110"/>
    </location>
</feature>
<feature type="transmembrane region" description="Helical" evidence="1">
    <location>
        <begin position="6"/>
        <end position="26"/>
    </location>
</feature>
<feature type="transmembrane region" description="Helical" evidence="1">
    <location>
        <begin position="32"/>
        <end position="52"/>
    </location>
</feature>
<feature type="transmembrane region" description="Helical" evidence="1">
    <location>
        <begin position="61"/>
        <end position="81"/>
    </location>
</feature>
<feature type="transmembrane region" description="Helical" evidence="1">
    <location>
        <begin position="90"/>
        <end position="110"/>
    </location>
</feature>
<name>Y2639_MYCTU</name>
<organism>
    <name type="scientific">Mycobacterium tuberculosis (strain ATCC 25618 / H37Rv)</name>
    <dbReference type="NCBI Taxonomy" id="83332"/>
    <lineage>
        <taxon>Bacteria</taxon>
        <taxon>Bacillati</taxon>
        <taxon>Actinomycetota</taxon>
        <taxon>Actinomycetes</taxon>
        <taxon>Mycobacteriales</taxon>
        <taxon>Mycobacteriaceae</taxon>
        <taxon>Mycobacterium</taxon>
        <taxon>Mycobacterium tuberculosis complex</taxon>
    </lineage>
</organism>
<reference key="1">
    <citation type="journal article" date="1998" name="Nature">
        <title>Deciphering the biology of Mycobacterium tuberculosis from the complete genome sequence.</title>
        <authorList>
            <person name="Cole S.T."/>
            <person name="Brosch R."/>
            <person name="Parkhill J."/>
            <person name="Garnier T."/>
            <person name="Churcher C.M."/>
            <person name="Harris D.E."/>
            <person name="Gordon S.V."/>
            <person name="Eiglmeier K."/>
            <person name="Gas S."/>
            <person name="Barry C.E. III"/>
            <person name="Tekaia F."/>
            <person name="Badcock K."/>
            <person name="Basham D."/>
            <person name="Brown D."/>
            <person name="Chillingworth T."/>
            <person name="Connor R."/>
            <person name="Davies R.M."/>
            <person name="Devlin K."/>
            <person name="Feltwell T."/>
            <person name="Gentles S."/>
            <person name="Hamlin N."/>
            <person name="Holroyd S."/>
            <person name="Hornsby T."/>
            <person name="Jagels K."/>
            <person name="Krogh A."/>
            <person name="McLean J."/>
            <person name="Moule S."/>
            <person name="Murphy L.D."/>
            <person name="Oliver S."/>
            <person name="Osborne J."/>
            <person name="Quail M.A."/>
            <person name="Rajandream M.A."/>
            <person name="Rogers J."/>
            <person name="Rutter S."/>
            <person name="Seeger K."/>
            <person name="Skelton S."/>
            <person name="Squares S."/>
            <person name="Squares R."/>
            <person name="Sulston J.E."/>
            <person name="Taylor K."/>
            <person name="Whitehead S."/>
            <person name="Barrell B.G."/>
        </authorList>
    </citation>
    <scope>NUCLEOTIDE SEQUENCE [LARGE SCALE GENOMIC DNA]</scope>
    <source>
        <strain>ATCC 25618 / H37Rv</strain>
    </source>
</reference>
<gene>
    <name type="ordered locus">Rv2639c</name>
    <name type="ORF">MTCY441.09c</name>
</gene>
<keyword id="KW-1003">Cell membrane</keyword>
<keyword id="KW-0472">Membrane</keyword>
<keyword id="KW-1185">Reference proteome</keyword>
<keyword id="KW-0812">Transmembrane</keyword>
<keyword id="KW-1133">Transmembrane helix</keyword>